<comment type="function">
    <text evidence="6">Guanine nucleotide exchange factor (GEF) that regulates the assembly of the coat protein complex II/COPII in endoplasmic reticulum (ER) to Golgi vesicle-mediated transport. Selectively activates SAR1A and SAR1B by promoting the exchange of guanosine diphosphate (GDP) for guanosine triphosphate (GTP) in these small GTPases (PubMed:11422940). In their activated GTP-bound state, SAR1A and SAR1B insert into the membrane of the endoplasmic reticulum where they recruit the remainder of the coat protein complex II/COPII which is responsible for both the sorting of proteins and the deformation and budding of membranes into vesicles destined to the Golgi (PubMed:11422940).</text>
</comment>
<comment type="function">
    <text evidence="5">Was first identified based on its probable role in the regulation of pituitary gene transcription. Binds to the prolactin gene (PRL) promoter and seems to activate transcription.</text>
</comment>
<comment type="subunit">
    <text evidence="1 2">Interacts with SAR1B (GDP-bound form) (By similarity). Interacts with MIA2; recruits PREB to endoplasmic reticulum exit sites (By similarity). Interacts with CIDEB; facilitating loading of SCAP-SREBP into COPII vesicles (By similarity).</text>
</comment>
<comment type="subcellular location">
    <subcellularLocation>
        <location evidence="6">Endoplasmic reticulum membrane</location>
        <topology evidence="6">Single-pass membrane protein</topology>
    </subcellularLocation>
    <subcellularLocation>
        <location evidence="5">Nucleus</location>
    </subcellularLocation>
    <text evidence="1">Concentrates at endoplasmic reticulum exit sites (ERES), also known as transitional endoplasmic reticulum (tER).</text>
</comment>
<sequence>MGRRRGVELYRAPFPLYALRIDPKTGLLIAAGGGGAAKTGIKNGVHFLQLEQISGCLSASLLHSHDTETRATMNLALAGDILAAGQDAQCQLLRFQIHQQKGSKAEKSGSKEQGPRQRKGAAPAEKKSGAEVHPEGVELKVKNLEAVQTDFSTEPLQKVVCFNHDNTLLATGGSDGHVRVWKVPSLEKVLEFKAHEGEIGDLALGPDGKLVTVGWDFKASVWQKDQLVTQLQWQENGPTSSNTPYRYQACRFGQVPDQPGGLRLFTVQIPHKRLRQPPPCYLTAWDSSTFLPLQTRSCGHEVISCLTVSESGTFLGLGTVTGSVAIYIAFSLQRLYYVKEAHGIVVTDVTFLPEKGCGPKLLGPHETALFSVAVDSRCQLHLLPSRRSVPVWLLLLLCVGLIIVTILLLQSAFPGFL</sequence>
<organism>
    <name type="scientific">Rattus norvegicus</name>
    <name type="common">Rat</name>
    <dbReference type="NCBI Taxonomy" id="10116"/>
    <lineage>
        <taxon>Eukaryota</taxon>
        <taxon>Metazoa</taxon>
        <taxon>Chordata</taxon>
        <taxon>Craniata</taxon>
        <taxon>Vertebrata</taxon>
        <taxon>Euteleostomi</taxon>
        <taxon>Mammalia</taxon>
        <taxon>Eutheria</taxon>
        <taxon>Euarchontoglires</taxon>
        <taxon>Glires</taxon>
        <taxon>Rodentia</taxon>
        <taxon>Myomorpha</taxon>
        <taxon>Muroidea</taxon>
        <taxon>Muridae</taxon>
        <taxon>Murinae</taxon>
        <taxon>Rattus</taxon>
    </lineage>
</organism>
<feature type="chain" id="PRO_0000051156" description="Guanine nucleotide-exchange factor SEC12">
    <location>
        <begin position="1"/>
        <end position="417"/>
    </location>
</feature>
<feature type="topological domain" description="Cytoplasmic" evidence="3">
    <location>
        <begin position="1"/>
        <end position="388"/>
    </location>
</feature>
<feature type="transmembrane region" description="Helical" evidence="3">
    <location>
        <begin position="389"/>
        <end position="409"/>
    </location>
</feature>
<feature type="topological domain" description="Lumenal" evidence="3">
    <location>
        <begin position="410"/>
        <end position="417"/>
    </location>
</feature>
<feature type="repeat" description="WD 1">
    <location>
        <begin position="152"/>
        <end position="191"/>
    </location>
</feature>
<feature type="repeat" description="WD 2">
    <location>
        <begin position="194"/>
        <end position="232"/>
    </location>
</feature>
<feature type="repeat" description="WD 3">
    <location>
        <begin position="298"/>
        <end position="337"/>
    </location>
</feature>
<feature type="region of interest" description="Disordered" evidence="4">
    <location>
        <begin position="101"/>
        <end position="135"/>
    </location>
</feature>
<feature type="compositionally biased region" description="Basic and acidic residues" evidence="4">
    <location>
        <begin position="103"/>
        <end position="115"/>
    </location>
</feature>
<feature type="compositionally biased region" description="Basic and acidic residues" evidence="4">
    <location>
        <begin position="124"/>
        <end position="135"/>
    </location>
</feature>
<feature type="modified residue" description="3'-nitrotyrosine" evidence="2">
    <location>
        <position position="10"/>
    </location>
</feature>
<feature type="sequence conflict" description="In Ref. 1; AAD28300." evidence="9" ref="1">
    <original>QIS</original>
    <variation>LIN</variation>
    <location>
        <begin position="52"/>
        <end position="54"/>
    </location>
</feature>
<feature type="sequence conflict" description="In Ref. 1; AAD28300." evidence="9" ref="1">
    <original>I</original>
    <variation>V</variation>
    <location>
        <position position="97"/>
    </location>
</feature>
<feature type="sequence conflict" description="In Ref. 1; AAD28300." evidence="9" ref="1">
    <original>A</original>
    <variation>P</variation>
    <location>
        <position position="122"/>
    </location>
</feature>
<feature type="sequence conflict" description="In Ref. 1; AAD28300." evidence="9" ref="1">
    <original>E</original>
    <variation>Q</variation>
    <location>
        <position position="131"/>
    </location>
</feature>
<feature type="sequence conflict" description="In Ref. 1; AAD28300." evidence="9" ref="1">
    <original>T</original>
    <variation>N</variation>
    <location>
        <position position="153"/>
    </location>
</feature>
<feature type="sequence conflict" description="In Ref. 1; AAD28300." evidence="9" ref="1">
    <original>S</original>
    <variation>T</variation>
    <location>
        <position position="174"/>
    </location>
</feature>
<feature type="sequence conflict" description="In Ref. 1; AAD28300." evidence="9" ref="1">
    <original>Q</original>
    <variation>R</variation>
    <location>
        <position position="294"/>
    </location>
</feature>
<gene>
    <name evidence="7 11" type="primary">Preb</name>
    <name evidence="8" type="synonym">Sec12</name>
</gene>
<evidence type="ECO:0000250" key="1">
    <source>
        <dbReference type="UniProtKB" id="Q9HCU5"/>
    </source>
</evidence>
<evidence type="ECO:0000250" key="2">
    <source>
        <dbReference type="UniProtKB" id="Q9WUQ2"/>
    </source>
</evidence>
<evidence type="ECO:0000255" key="3"/>
<evidence type="ECO:0000256" key="4">
    <source>
        <dbReference type="SAM" id="MobiDB-lite"/>
    </source>
</evidence>
<evidence type="ECO:0000269" key="5">
    <source>
    </source>
</evidence>
<evidence type="ECO:0000269" key="6">
    <source>
    </source>
</evidence>
<evidence type="ECO:0000303" key="7">
    <source>
    </source>
</evidence>
<evidence type="ECO:0000303" key="8">
    <source>
    </source>
</evidence>
<evidence type="ECO:0000305" key="9"/>
<evidence type="ECO:0000305" key="10">
    <source>
    </source>
</evidence>
<evidence type="ECO:0000312" key="11">
    <source>
        <dbReference type="RGD" id="61929"/>
    </source>
</evidence>
<name>SEC12_RAT</name>
<protein>
    <recommendedName>
        <fullName evidence="10">Guanine nucleotide-exchange factor SEC12</fullName>
    </recommendedName>
    <alternativeName>
        <fullName evidence="8">Mammalian guanine nucleotide exchange factor Sec12</fullName>
        <shortName evidence="8">mSec12</shortName>
    </alternativeName>
    <alternativeName>
        <fullName evidence="7">Prolactin regulatory element-binding protein</fullName>
    </alternativeName>
</protein>
<dbReference type="EMBL" id="AF061817">
    <property type="protein sequence ID" value="AAD28300.1"/>
    <property type="molecule type" value="mRNA"/>
</dbReference>
<dbReference type="EMBL" id="BC078936">
    <property type="protein sequence ID" value="AAH78936.1"/>
    <property type="molecule type" value="mRNA"/>
</dbReference>
<dbReference type="RefSeq" id="NP_001164179.1">
    <property type="nucleotide sequence ID" value="NM_001170708.1"/>
</dbReference>
<dbReference type="SMR" id="Q9WTV0"/>
<dbReference type="FunCoup" id="Q9WTV0">
    <property type="interactions" value="2347"/>
</dbReference>
<dbReference type="STRING" id="10116.ENSRNOP00000009566"/>
<dbReference type="GlyGen" id="Q9WTV0">
    <property type="glycosylation" value="1 site"/>
</dbReference>
<dbReference type="iPTMnet" id="Q9WTV0"/>
<dbReference type="PhosphoSitePlus" id="Q9WTV0"/>
<dbReference type="jPOST" id="Q9WTV0"/>
<dbReference type="PaxDb" id="10116-ENSRNOP00000009566"/>
<dbReference type="GeneID" id="58842"/>
<dbReference type="KEGG" id="rno:58842"/>
<dbReference type="AGR" id="RGD:61929"/>
<dbReference type="CTD" id="10113"/>
<dbReference type="RGD" id="61929">
    <property type="gene designation" value="Preb"/>
</dbReference>
<dbReference type="eggNOG" id="KOG0771">
    <property type="taxonomic scope" value="Eukaryota"/>
</dbReference>
<dbReference type="InParanoid" id="Q9WTV0"/>
<dbReference type="OrthoDB" id="2013972at2759"/>
<dbReference type="PhylomeDB" id="Q9WTV0"/>
<dbReference type="Reactome" id="R-RNO-204005">
    <property type="pathway name" value="COPII-mediated vesicle transport"/>
</dbReference>
<dbReference type="Reactome" id="R-RNO-5694530">
    <property type="pathway name" value="Cargo concentration in the ER"/>
</dbReference>
<dbReference type="PRO" id="PR:Q9WTV0"/>
<dbReference type="Proteomes" id="UP000002494">
    <property type="component" value="Unplaced"/>
</dbReference>
<dbReference type="GO" id="GO:0070971">
    <property type="term" value="C:endoplasmic reticulum exit site"/>
    <property type="evidence" value="ECO:0000250"/>
    <property type="project" value="UniProtKB"/>
</dbReference>
<dbReference type="GO" id="GO:0005789">
    <property type="term" value="C:endoplasmic reticulum membrane"/>
    <property type="evidence" value="ECO:0000314"/>
    <property type="project" value="UniProtKB"/>
</dbReference>
<dbReference type="GO" id="GO:0005634">
    <property type="term" value="C:nucleus"/>
    <property type="evidence" value="ECO:0000266"/>
    <property type="project" value="RGD"/>
</dbReference>
<dbReference type="GO" id="GO:0051020">
    <property type="term" value="F:GTPase binding"/>
    <property type="evidence" value="ECO:0000266"/>
    <property type="project" value="RGD"/>
</dbReference>
<dbReference type="GO" id="GO:0005085">
    <property type="term" value="F:guanyl-nucleotide exchange factor activity"/>
    <property type="evidence" value="ECO:0000250"/>
    <property type="project" value="UniProtKB"/>
</dbReference>
<dbReference type="GO" id="GO:0000978">
    <property type="term" value="F:RNA polymerase II cis-regulatory region sequence-specific DNA binding"/>
    <property type="evidence" value="ECO:0000314"/>
    <property type="project" value="RGD"/>
</dbReference>
<dbReference type="GO" id="GO:0048208">
    <property type="term" value="P:COPII vesicle coating"/>
    <property type="evidence" value="ECO:0000314"/>
    <property type="project" value="UniProtKB"/>
</dbReference>
<dbReference type="GO" id="GO:0006888">
    <property type="term" value="P:endoplasmic reticulum to Golgi vesicle-mediated transport"/>
    <property type="evidence" value="ECO:0000314"/>
    <property type="project" value="UniProtKB"/>
</dbReference>
<dbReference type="GO" id="GO:0045944">
    <property type="term" value="P:positive regulation of transcription by RNA polymerase II"/>
    <property type="evidence" value="ECO:0000314"/>
    <property type="project" value="RGD"/>
</dbReference>
<dbReference type="GO" id="GO:0015031">
    <property type="term" value="P:protein transport"/>
    <property type="evidence" value="ECO:0007669"/>
    <property type="project" value="UniProtKB-KW"/>
</dbReference>
<dbReference type="GO" id="GO:0003400">
    <property type="term" value="P:regulation of COPII vesicle coating"/>
    <property type="evidence" value="ECO:0000266"/>
    <property type="project" value="RGD"/>
</dbReference>
<dbReference type="Gene3D" id="2.130.10.10">
    <property type="entry name" value="YVTN repeat-like/Quinoprotein amine dehydrogenase"/>
    <property type="match status" value="1"/>
</dbReference>
<dbReference type="InterPro" id="IPR011047">
    <property type="entry name" value="Quinoprotein_ADH-like_sf"/>
</dbReference>
<dbReference type="InterPro" id="IPR045260">
    <property type="entry name" value="Sec12-like"/>
</dbReference>
<dbReference type="InterPro" id="IPR015943">
    <property type="entry name" value="WD40/YVTN_repeat-like_dom_sf"/>
</dbReference>
<dbReference type="InterPro" id="IPR001680">
    <property type="entry name" value="WD40_rpt"/>
</dbReference>
<dbReference type="PANTHER" id="PTHR23284">
    <property type="entry name" value="PROLACTIN REGULATORY ELEMENT BINDING PROTEIN"/>
    <property type="match status" value="1"/>
</dbReference>
<dbReference type="PANTHER" id="PTHR23284:SF0">
    <property type="entry name" value="PROLACTIN REGULATORY ELEMENT-BINDING PROTEIN"/>
    <property type="match status" value="1"/>
</dbReference>
<dbReference type="Pfam" id="PF00400">
    <property type="entry name" value="WD40"/>
    <property type="match status" value="2"/>
</dbReference>
<dbReference type="SMART" id="SM00320">
    <property type="entry name" value="WD40"/>
    <property type="match status" value="3"/>
</dbReference>
<dbReference type="SUPFAM" id="SSF50998">
    <property type="entry name" value="Quinoprotein alcohol dehydrogenase-like"/>
    <property type="match status" value="1"/>
</dbReference>
<dbReference type="PROSITE" id="PS50082">
    <property type="entry name" value="WD_REPEATS_2"/>
    <property type="match status" value="1"/>
</dbReference>
<dbReference type="PROSITE" id="PS50294">
    <property type="entry name" value="WD_REPEATS_REGION"/>
    <property type="match status" value="1"/>
</dbReference>
<reference key="1">
    <citation type="journal article" date="1999" name="Mol. Endocrinol.">
        <title>Expression cloning and characterization of PREB (prolactin regulatory element binding), a novel WD motif DNA-binding protein with a capacity to regulate prolactin promoter activity.</title>
        <authorList>
            <person name="Fliss M.S."/>
            <person name="Hinkle P.M."/>
            <person name="Bancroft C."/>
        </authorList>
    </citation>
    <scope>NUCLEOTIDE SEQUENCE [MRNA]</scope>
    <scope>FUNCTION</scope>
    <scope>SUBCELLULAR LOCATION</scope>
    <source>
        <strain>Wistar Furth</strain>
        <tissue>Pituitary</tissue>
    </source>
</reference>
<reference key="2">
    <citation type="journal article" date="2004" name="Genome Res.">
        <title>The status, quality, and expansion of the NIH full-length cDNA project: the Mammalian Gene Collection (MGC).</title>
        <authorList>
            <consortium name="The MGC Project Team"/>
        </authorList>
    </citation>
    <scope>NUCLEOTIDE SEQUENCE [LARGE SCALE MRNA]</scope>
    <source>
        <tissue>Kidney</tissue>
    </source>
</reference>
<reference key="3">
    <citation type="journal article" date="2001" name="Traffic">
        <title>The mammalian guanine nucleotide exchange factor mSec12 is essential for activation of the Sar1 GTPase directing endoplasmic reticulum export.</title>
        <authorList>
            <person name="Weissman J.T."/>
            <person name="Plutner H."/>
            <person name="Balch W.E."/>
        </authorList>
    </citation>
    <scope>FUNCTION</scope>
    <scope>SUBCELLULAR LOCATION</scope>
    <scope>TOPOLOGY</scope>
</reference>
<keyword id="KW-0010">Activator</keyword>
<keyword id="KW-0238">DNA-binding</keyword>
<keyword id="KW-0256">Endoplasmic reticulum</keyword>
<keyword id="KW-0931">ER-Golgi transport</keyword>
<keyword id="KW-0472">Membrane</keyword>
<keyword id="KW-0944">Nitration</keyword>
<keyword id="KW-0539">Nucleus</keyword>
<keyword id="KW-0653">Protein transport</keyword>
<keyword id="KW-1185">Reference proteome</keyword>
<keyword id="KW-0677">Repeat</keyword>
<keyword id="KW-0804">Transcription</keyword>
<keyword id="KW-0805">Transcription regulation</keyword>
<keyword id="KW-0812">Transmembrane</keyword>
<keyword id="KW-1133">Transmembrane helix</keyword>
<keyword id="KW-0813">Transport</keyword>
<keyword id="KW-0853">WD repeat</keyword>
<proteinExistence type="evidence at protein level"/>
<accession>Q9WTV0</accession>
<accession>Q6AYS1</accession>